<evidence type="ECO:0000255" key="1"/>
<evidence type="ECO:0000305" key="2"/>
<organism>
    <name type="scientific">Rhizobium meliloti (strain 1021)</name>
    <name type="common">Ensifer meliloti</name>
    <name type="synonym">Sinorhizobium meliloti</name>
    <dbReference type="NCBI Taxonomy" id="266834"/>
    <lineage>
        <taxon>Bacteria</taxon>
        <taxon>Pseudomonadati</taxon>
        <taxon>Pseudomonadota</taxon>
        <taxon>Alphaproteobacteria</taxon>
        <taxon>Hyphomicrobiales</taxon>
        <taxon>Rhizobiaceae</taxon>
        <taxon>Sinorhizobium/Ensifer group</taxon>
        <taxon>Sinorhizobium</taxon>
    </lineage>
</organism>
<accession>P56949</accession>
<reference key="1">
    <citation type="journal article" date="2000" name="J. Biol. Chem.">
        <title>Cloning and characterization of the gene for phosphatidylcholine synthase.</title>
        <authorList>
            <person name="Sohlenkamp C."/>
            <person name="de Rudder K.E.E."/>
            <person name="Roehrs V."/>
            <person name="Lopez-Lara I.M."/>
            <person name="Geiger O."/>
        </authorList>
    </citation>
    <scope>NUCLEOTIDE SEQUENCE [GENOMIC DNA]</scope>
    <source>
        <strain>1021</strain>
    </source>
</reference>
<reference key="2">
    <citation type="journal article" date="2001" name="Proc. Natl. Acad. Sci. U.S.A.">
        <title>Analysis of the chromosome sequence of the legume symbiont Sinorhizobium meliloti strain 1021.</title>
        <authorList>
            <person name="Capela D."/>
            <person name="Barloy-Hubler F."/>
            <person name="Gouzy J."/>
            <person name="Bothe G."/>
            <person name="Ampe F."/>
            <person name="Batut J."/>
            <person name="Boistard P."/>
            <person name="Becker A."/>
            <person name="Boutry M."/>
            <person name="Cadieu E."/>
            <person name="Dreano S."/>
            <person name="Gloux S."/>
            <person name="Godrie T."/>
            <person name="Goffeau A."/>
            <person name="Kahn D."/>
            <person name="Kiss E."/>
            <person name="Lelaure V."/>
            <person name="Masuy D."/>
            <person name="Pohl T."/>
            <person name="Portetelle D."/>
            <person name="Puehler A."/>
            <person name="Purnelle B."/>
            <person name="Ramsperger U."/>
            <person name="Renard C."/>
            <person name="Thebault P."/>
            <person name="Vandenbol M."/>
            <person name="Weidner S."/>
            <person name="Galibert F."/>
        </authorList>
    </citation>
    <scope>NUCLEOTIDE SEQUENCE [LARGE SCALE GENOMIC DNA]</scope>
    <source>
        <strain>1021</strain>
    </source>
</reference>
<reference key="3">
    <citation type="journal article" date="2001" name="Science">
        <title>The composite genome of the legume symbiont Sinorhizobium meliloti.</title>
        <authorList>
            <person name="Galibert F."/>
            <person name="Finan T.M."/>
            <person name="Long S.R."/>
            <person name="Puehler A."/>
            <person name="Abola P."/>
            <person name="Ampe F."/>
            <person name="Barloy-Hubler F."/>
            <person name="Barnett M.J."/>
            <person name="Becker A."/>
            <person name="Boistard P."/>
            <person name="Bothe G."/>
            <person name="Boutry M."/>
            <person name="Bowser L."/>
            <person name="Buhrmester J."/>
            <person name="Cadieu E."/>
            <person name="Capela D."/>
            <person name="Chain P."/>
            <person name="Cowie A."/>
            <person name="Davis R.W."/>
            <person name="Dreano S."/>
            <person name="Federspiel N.A."/>
            <person name="Fisher R.F."/>
            <person name="Gloux S."/>
            <person name="Godrie T."/>
            <person name="Goffeau A."/>
            <person name="Golding B."/>
            <person name="Gouzy J."/>
            <person name="Gurjal M."/>
            <person name="Hernandez-Lucas I."/>
            <person name="Hong A."/>
            <person name="Huizar L."/>
            <person name="Hyman R.W."/>
            <person name="Jones T."/>
            <person name="Kahn D."/>
            <person name="Kahn M.L."/>
            <person name="Kalman S."/>
            <person name="Keating D.H."/>
            <person name="Kiss E."/>
            <person name="Komp C."/>
            <person name="Lelaure V."/>
            <person name="Masuy D."/>
            <person name="Palm C."/>
            <person name="Peck M.C."/>
            <person name="Pohl T.M."/>
            <person name="Portetelle D."/>
            <person name="Purnelle B."/>
            <person name="Ramsperger U."/>
            <person name="Surzycki R."/>
            <person name="Thebault P."/>
            <person name="Vandenbol M."/>
            <person name="Vorhoelter F.J."/>
            <person name="Weidner S."/>
            <person name="Wells D.H."/>
            <person name="Wong K."/>
            <person name="Yeh K.-C."/>
            <person name="Batut J."/>
        </authorList>
    </citation>
    <scope>NUCLEOTIDE SEQUENCE [LARGE SCALE GENOMIC DNA]</scope>
    <source>
        <strain>1021</strain>
    </source>
</reference>
<proteinExistence type="inferred from homology"/>
<gene>
    <name type="primary">mdcF</name>
    <name type="ordered locus">R01674</name>
    <name type="ORF">SMc00317</name>
</gene>
<sequence length="320" mass="34020">MAEITGLVLPFFGLIFLGYLTARLVDHPGEAMGWLNTFIVYLALPALFFKLVSRTPVEELTRADFILTSVGTTYVVFALIFAIGLFLRRNTVAEATMQGFAGAYGNIGYMGPGLALLALGETAAVPVALIFCFENAAHFTVAPAMMAAAGGSKQKPAVVALGIARRIAFHPFILSTFAGVAAAFLSFEPPLPLQRLIDYLAQAAAPCALFAMGVTLALRPLKRIPAEIGYIVPAKLVLHPVLMYLALSLGGAYDPIWVQTAVLLASLPTATNVFVIGQQYGVWQERASATILITTLLSVATVTGLLYLIRSGALPADLFP</sequence>
<protein>
    <recommendedName>
        <fullName>Putative malonate transporter</fullName>
    </recommendedName>
</protein>
<keyword id="KW-1003">Cell membrane</keyword>
<keyword id="KW-0472">Membrane</keyword>
<keyword id="KW-1185">Reference proteome</keyword>
<keyword id="KW-0812">Transmembrane</keyword>
<keyword id="KW-1133">Transmembrane helix</keyword>
<keyword id="KW-0813">Transport</keyword>
<name>MDCF_RHIME</name>
<comment type="subcellular location">
    <subcellularLocation>
        <location evidence="2">Cell membrane</location>
        <topology evidence="2">Multi-pass membrane protein</topology>
    </subcellularLocation>
</comment>
<comment type="similarity">
    <text evidence="2">Belongs to the auxin efflux carrier (TC 2.A.69) family.</text>
</comment>
<dbReference type="EMBL" id="AF155772">
    <property type="protein sequence ID" value="AAF27308.1"/>
    <property type="molecule type" value="Genomic_DNA"/>
</dbReference>
<dbReference type="EMBL" id="AL591688">
    <property type="protein sequence ID" value="CAC46253.1"/>
    <property type="molecule type" value="Genomic_DNA"/>
</dbReference>
<dbReference type="RefSeq" id="NP_385780.1">
    <property type="nucleotide sequence ID" value="NC_003047.1"/>
</dbReference>
<dbReference type="RefSeq" id="WP_003533213.1">
    <property type="nucleotide sequence ID" value="NC_003047.1"/>
</dbReference>
<dbReference type="SMR" id="P56949"/>
<dbReference type="TCDB" id="2.A.69.3.4">
    <property type="family name" value="the auxin efflux carrier (aec) family"/>
</dbReference>
<dbReference type="EnsemblBacteria" id="CAC46253">
    <property type="protein sequence ID" value="CAC46253"/>
    <property type="gene ID" value="SMc00317"/>
</dbReference>
<dbReference type="KEGG" id="sme:SMc00317"/>
<dbReference type="PATRIC" id="fig|266834.11.peg.3107"/>
<dbReference type="eggNOG" id="COG0679">
    <property type="taxonomic scope" value="Bacteria"/>
</dbReference>
<dbReference type="HOGENOM" id="CLU_056175_2_1_5"/>
<dbReference type="OrthoDB" id="7329340at2"/>
<dbReference type="Proteomes" id="UP000001976">
    <property type="component" value="Chromosome"/>
</dbReference>
<dbReference type="GO" id="GO:0005886">
    <property type="term" value="C:plasma membrane"/>
    <property type="evidence" value="ECO:0007669"/>
    <property type="project" value="UniProtKB-SubCell"/>
</dbReference>
<dbReference type="GO" id="GO:0055085">
    <property type="term" value="P:transmembrane transport"/>
    <property type="evidence" value="ECO:0007669"/>
    <property type="project" value="InterPro"/>
</dbReference>
<dbReference type="Gene3D" id="1.20.1530.20">
    <property type="match status" value="1"/>
</dbReference>
<dbReference type="InterPro" id="IPR004776">
    <property type="entry name" value="Mem_transp_PIN-like"/>
</dbReference>
<dbReference type="InterPro" id="IPR038770">
    <property type="entry name" value="Na+/solute_symporter_sf"/>
</dbReference>
<dbReference type="PANTHER" id="PTHR36838">
    <property type="entry name" value="AUXIN EFFLUX CARRIER FAMILY PROTEIN"/>
    <property type="match status" value="1"/>
</dbReference>
<dbReference type="PANTHER" id="PTHR36838:SF3">
    <property type="entry name" value="TRANSPORTER AUXIN EFFLUX CARRIER EC FAMILY"/>
    <property type="match status" value="1"/>
</dbReference>
<dbReference type="Pfam" id="PF03547">
    <property type="entry name" value="Mem_trans"/>
    <property type="match status" value="1"/>
</dbReference>
<feature type="chain" id="PRO_0000123797" description="Putative malonate transporter">
    <location>
        <begin position="1"/>
        <end position="320"/>
    </location>
</feature>
<feature type="transmembrane region" description="Helical" evidence="1">
    <location>
        <begin position="1"/>
        <end position="21"/>
    </location>
</feature>
<feature type="transmembrane region" description="Helical" evidence="1">
    <location>
        <begin position="32"/>
        <end position="52"/>
    </location>
</feature>
<feature type="transmembrane region" description="Helical" evidence="1">
    <location>
        <begin position="65"/>
        <end position="85"/>
    </location>
</feature>
<feature type="transmembrane region" description="Helical" evidence="1">
    <location>
        <begin position="113"/>
        <end position="133"/>
    </location>
</feature>
<feature type="transmembrane region" description="Helical" evidence="1">
    <location>
        <begin position="167"/>
        <end position="187"/>
    </location>
</feature>
<feature type="transmembrane region" description="Helical" evidence="1">
    <location>
        <begin position="196"/>
        <end position="216"/>
    </location>
</feature>
<feature type="transmembrane region" description="Helical" evidence="1">
    <location>
        <begin position="256"/>
        <end position="276"/>
    </location>
</feature>
<feature type="transmembrane region" description="Helical" evidence="1">
    <location>
        <begin position="289"/>
        <end position="309"/>
    </location>
</feature>